<proteinExistence type="evidence at protein level"/>
<reference evidence="6" key="1">
    <citation type="journal article" date="2015" name="Peptides">
        <title>Peptides from the scorpion Vaejovis punctatus with broad antimicrobial activity.</title>
        <authorList>
            <person name="Ramirez-Carreto S."/>
            <person name="Jimenez-Vargas J.M."/>
            <person name="Rivas-Santiago B."/>
            <person name="Corzo G."/>
            <person name="Possani L.D."/>
            <person name="Becerril B."/>
            <person name="Ortiz E."/>
        </authorList>
    </citation>
    <scope>NUCLEOTIDE SEQUENCE [MRNA]</scope>
    <scope>PROBABLE AMIDATION AT ILE-41</scope>
    <scope>SYNTHESIS OF 23-41</scope>
    <scope>MUTAGENESIS OF 23-LEU-PRO-24</scope>
    <source>
        <tissue>Venom gland</tissue>
    </source>
</reference>
<keyword id="KW-0027">Amidation</keyword>
<keyword id="KW-0044">Antibiotic</keyword>
<keyword id="KW-0929">Antimicrobial</keyword>
<keyword id="KW-0165">Cleavage on pair of basic residues</keyword>
<keyword id="KW-0204">Cytolysis</keyword>
<keyword id="KW-0295">Fungicide</keyword>
<keyword id="KW-0472">Membrane</keyword>
<keyword id="KW-0964">Secreted</keyword>
<keyword id="KW-0732">Signal</keyword>
<keyword id="KW-1052">Target cell membrane</keyword>
<keyword id="KW-1053">Target membrane</keyword>
<dbReference type="EMBL" id="KR697560">
    <property type="protein sequence ID" value="ALG64974.1"/>
    <property type="molecule type" value="mRNA"/>
</dbReference>
<dbReference type="GO" id="GO:0005576">
    <property type="term" value="C:extracellular region"/>
    <property type="evidence" value="ECO:0007669"/>
    <property type="project" value="UniProtKB-SubCell"/>
</dbReference>
<dbReference type="GO" id="GO:0016020">
    <property type="term" value="C:membrane"/>
    <property type="evidence" value="ECO:0007669"/>
    <property type="project" value="UniProtKB-KW"/>
</dbReference>
<dbReference type="GO" id="GO:0044218">
    <property type="term" value="C:other organism cell membrane"/>
    <property type="evidence" value="ECO:0007669"/>
    <property type="project" value="UniProtKB-KW"/>
</dbReference>
<dbReference type="GO" id="GO:0042742">
    <property type="term" value="P:defense response to bacterium"/>
    <property type="evidence" value="ECO:0007669"/>
    <property type="project" value="UniProtKB-KW"/>
</dbReference>
<dbReference type="GO" id="GO:0050832">
    <property type="term" value="P:defense response to fungus"/>
    <property type="evidence" value="ECO:0007669"/>
    <property type="project" value="UniProtKB-KW"/>
</dbReference>
<dbReference type="GO" id="GO:0031640">
    <property type="term" value="P:killing of cells of another organism"/>
    <property type="evidence" value="ECO:0007669"/>
    <property type="project" value="UniProtKB-KW"/>
</dbReference>
<evidence type="ECO:0000255" key="1"/>
<evidence type="ECO:0000269" key="2">
    <source>
    </source>
</evidence>
<evidence type="ECO:0000303" key="3">
    <source>
    </source>
</evidence>
<evidence type="ECO:0000305" key="4"/>
<evidence type="ECO:0000305" key="5">
    <source>
    </source>
</evidence>
<evidence type="ECO:0000312" key="6">
    <source>
        <dbReference type="EMBL" id="ALG64974.1"/>
    </source>
</evidence>
<organism>
    <name type="scientific">Mesomexovis punctatus</name>
    <name type="common">Scorpion</name>
    <name type="synonym">Vaejovis punctatus</name>
    <dbReference type="NCBI Taxonomy" id="1532993"/>
    <lineage>
        <taxon>Eukaryota</taxon>
        <taxon>Metazoa</taxon>
        <taxon>Ecdysozoa</taxon>
        <taxon>Arthropoda</taxon>
        <taxon>Chelicerata</taxon>
        <taxon>Arachnida</taxon>
        <taxon>Scorpiones</taxon>
        <taxon>Iurida</taxon>
        <taxon>Chactoidea</taxon>
        <taxon>Vaejovidae</taxon>
        <taxon>Mesomexovis</taxon>
    </lineage>
</organism>
<protein>
    <recommendedName>
        <fullName evidence="3">VpAmp1.0</fullName>
    </recommendedName>
</protein>
<feature type="signal peptide" evidence="1">
    <location>
        <begin position="1"/>
        <end position="22"/>
    </location>
</feature>
<feature type="peptide" id="PRO_0000461833" description="VpAmp1.0" evidence="5">
    <location>
        <begin position="23"/>
        <end position="41"/>
    </location>
</feature>
<feature type="propeptide" id="PRO_0000461834" evidence="5">
    <location>
        <begin position="42"/>
        <end position="76"/>
    </location>
</feature>
<feature type="modified residue" description="Isoleucine amide" evidence="5">
    <location>
        <position position="41"/>
    </location>
</feature>
<feature type="mutagenesis site" description="In VpAmp1.1: Decrease in antimicrobial activity against bacteria S.aureus, P.aeruginosa and S.agalactiaea. No change in antimicrobial activity against yeasts. 3-fold decrease in hemolysis." evidence="2">
    <location>
        <begin position="23"/>
        <end position="24"/>
    </location>
</feature>
<comment type="function">
    <text evidence="2">Antimicrobial peptide with potent activity against Gram-positive bacteria S.aureus (MIC=2.5 uM) and S.agalactiaea (MIC=2.5 uM), and Gram-negative bacteria E.coli (MIC=24 uM) and P.aeruginosa (MIC=2.5 uM), as well as against yeasts Candida albicans (MIC=6.25 uM) and C.glabrata (MIC&gt;50 uM). Also elicits high hemolysis on human erythrocytes (HC(50)=9.2 uM).</text>
</comment>
<comment type="subcellular location">
    <subcellularLocation>
        <location evidence="5">Secreted</location>
    </subcellularLocation>
    <subcellularLocation>
        <location evidence="4">Target cell membrane</location>
    </subcellularLocation>
</comment>
<comment type="tissue specificity">
    <text evidence="5">Expressed by the venom gland.</text>
</comment>
<comment type="similarity">
    <text evidence="4">Belongs to the non-disulfide-bridged peptide (NDBP) superfamily. Short antimicrobial peptide (group 4) family.</text>
</comment>
<sequence>MKLINLVPVFFVLIIVVDYCHSLPFFLLSLIPSAISAIKKIGKRSVESQRYVDLNRRDLEQDLQELQDFLDQISEH</sequence>
<name>NDB1_MESPU</name>
<accession>A0A0N9LWM6</accession>